<gene>
    <name type="primary">IAA17</name>
    <name type="synonym">AXR3</name>
    <name type="ordered locus">At1g04250</name>
    <name type="ORF">F19P19.31</name>
</gene>
<name>IAA17_ARATH</name>
<reference key="1">
    <citation type="journal article" date="1997" name="Proc. Natl. Acad. Sci. U.S.A.">
        <title>Protein-protein interactions among the Aux/IAA proteins.</title>
        <authorList>
            <person name="Kim J."/>
            <person name="Harter K."/>
            <person name="Theologis A."/>
        </authorList>
    </citation>
    <scope>NUCLEOTIDE SEQUENCE [MRNA]</scope>
    <scope>INTERACTION WITH IAA1</scope>
    <source>
        <strain>cv. Columbia</strain>
    </source>
</reference>
<reference key="2">
    <citation type="journal article" date="1998" name="Science">
        <title>Changes in auxin response from mutations in an AUX/IAA gene.</title>
        <authorList>
            <person name="Rouse D."/>
            <person name="Mackay P."/>
            <person name="Stirnberg P."/>
            <person name="Estelle M."/>
            <person name="Leyser O."/>
        </authorList>
    </citation>
    <scope>NUCLEOTIDE SEQUENCE [GENOMIC DNA]</scope>
    <scope>MUTANTS AXR3-1 AND AXR3-3</scope>
    <scope>MUTAGENESIS OF LEU-16; ASP-118 AND PRO-121</scope>
    <source>
        <strain>cv. Columbia</strain>
    </source>
</reference>
<reference key="3">
    <citation type="journal article" date="2000" name="Nature">
        <title>Sequence and analysis of chromosome 1 of the plant Arabidopsis thaliana.</title>
        <authorList>
            <person name="Theologis A."/>
            <person name="Ecker J.R."/>
            <person name="Palm C.J."/>
            <person name="Federspiel N.A."/>
            <person name="Kaul S."/>
            <person name="White O."/>
            <person name="Alonso J."/>
            <person name="Altafi H."/>
            <person name="Araujo R."/>
            <person name="Bowman C.L."/>
            <person name="Brooks S.Y."/>
            <person name="Buehler E."/>
            <person name="Chan A."/>
            <person name="Chao Q."/>
            <person name="Chen H."/>
            <person name="Cheuk R.F."/>
            <person name="Chin C.W."/>
            <person name="Chung M.K."/>
            <person name="Conn L."/>
            <person name="Conway A.B."/>
            <person name="Conway A.R."/>
            <person name="Creasy T.H."/>
            <person name="Dewar K."/>
            <person name="Dunn P."/>
            <person name="Etgu P."/>
            <person name="Feldblyum T.V."/>
            <person name="Feng J.-D."/>
            <person name="Fong B."/>
            <person name="Fujii C.Y."/>
            <person name="Gill J.E."/>
            <person name="Goldsmith A.D."/>
            <person name="Haas B."/>
            <person name="Hansen N.F."/>
            <person name="Hughes B."/>
            <person name="Huizar L."/>
            <person name="Hunter J.L."/>
            <person name="Jenkins J."/>
            <person name="Johnson-Hopson C."/>
            <person name="Khan S."/>
            <person name="Khaykin E."/>
            <person name="Kim C.J."/>
            <person name="Koo H.L."/>
            <person name="Kremenetskaia I."/>
            <person name="Kurtz D.B."/>
            <person name="Kwan A."/>
            <person name="Lam B."/>
            <person name="Langin-Hooper S."/>
            <person name="Lee A."/>
            <person name="Lee J.M."/>
            <person name="Lenz C.A."/>
            <person name="Li J.H."/>
            <person name="Li Y.-P."/>
            <person name="Lin X."/>
            <person name="Liu S.X."/>
            <person name="Liu Z.A."/>
            <person name="Luros J.S."/>
            <person name="Maiti R."/>
            <person name="Marziali A."/>
            <person name="Militscher J."/>
            <person name="Miranda M."/>
            <person name="Nguyen M."/>
            <person name="Nierman W.C."/>
            <person name="Osborne B.I."/>
            <person name="Pai G."/>
            <person name="Peterson J."/>
            <person name="Pham P.K."/>
            <person name="Rizzo M."/>
            <person name="Rooney T."/>
            <person name="Rowley D."/>
            <person name="Sakano H."/>
            <person name="Salzberg S.L."/>
            <person name="Schwartz J.R."/>
            <person name="Shinn P."/>
            <person name="Southwick A.M."/>
            <person name="Sun H."/>
            <person name="Tallon L.J."/>
            <person name="Tambunga G."/>
            <person name="Toriumi M.J."/>
            <person name="Town C.D."/>
            <person name="Utterback T."/>
            <person name="Van Aken S."/>
            <person name="Vaysberg M."/>
            <person name="Vysotskaia V.S."/>
            <person name="Walker M."/>
            <person name="Wu D."/>
            <person name="Yu G."/>
            <person name="Fraser C.M."/>
            <person name="Venter J.C."/>
            <person name="Davis R.W."/>
        </authorList>
    </citation>
    <scope>NUCLEOTIDE SEQUENCE [LARGE SCALE GENOMIC DNA]</scope>
    <source>
        <strain>cv. Columbia</strain>
    </source>
</reference>
<reference key="4">
    <citation type="journal article" date="2017" name="Plant J.">
        <title>Araport11: a complete reannotation of the Arabidopsis thaliana reference genome.</title>
        <authorList>
            <person name="Cheng C.Y."/>
            <person name="Krishnakumar V."/>
            <person name="Chan A.P."/>
            <person name="Thibaud-Nissen F."/>
            <person name="Schobel S."/>
            <person name="Town C.D."/>
        </authorList>
    </citation>
    <scope>GENOME REANNOTATION</scope>
    <source>
        <strain>cv. Columbia</strain>
    </source>
</reference>
<reference key="5">
    <citation type="journal article" date="2003" name="Science">
        <title>Empirical analysis of transcriptional activity in the Arabidopsis genome.</title>
        <authorList>
            <person name="Yamada K."/>
            <person name="Lim J."/>
            <person name="Dale J.M."/>
            <person name="Chen H."/>
            <person name="Shinn P."/>
            <person name="Palm C.J."/>
            <person name="Southwick A.M."/>
            <person name="Wu H.C."/>
            <person name="Kim C.J."/>
            <person name="Nguyen M."/>
            <person name="Pham P.K."/>
            <person name="Cheuk R.F."/>
            <person name="Karlin-Newmann G."/>
            <person name="Liu S.X."/>
            <person name="Lam B."/>
            <person name="Sakano H."/>
            <person name="Wu T."/>
            <person name="Yu G."/>
            <person name="Miranda M."/>
            <person name="Quach H.L."/>
            <person name="Tripp M."/>
            <person name="Chang C.H."/>
            <person name="Lee J.M."/>
            <person name="Toriumi M.J."/>
            <person name="Chan M.M."/>
            <person name="Tang C.C."/>
            <person name="Onodera C.S."/>
            <person name="Deng J.M."/>
            <person name="Akiyama K."/>
            <person name="Ansari Y."/>
            <person name="Arakawa T."/>
            <person name="Banh J."/>
            <person name="Banno F."/>
            <person name="Bowser L."/>
            <person name="Brooks S.Y."/>
            <person name="Carninci P."/>
            <person name="Chao Q."/>
            <person name="Choy N."/>
            <person name="Enju A."/>
            <person name="Goldsmith A.D."/>
            <person name="Gurjal M."/>
            <person name="Hansen N.F."/>
            <person name="Hayashizaki Y."/>
            <person name="Johnson-Hopson C."/>
            <person name="Hsuan V.W."/>
            <person name="Iida K."/>
            <person name="Karnes M."/>
            <person name="Khan S."/>
            <person name="Koesema E."/>
            <person name="Ishida J."/>
            <person name="Jiang P.X."/>
            <person name="Jones T."/>
            <person name="Kawai J."/>
            <person name="Kamiya A."/>
            <person name="Meyers C."/>
            <person name="Nakajima M."/>
            <person name="Narusaka M."/>
            <person name="Seki M."/>
            <person name="Sakurai T."/>
            <person name="Satou M."/>
            <person name="Tamse R."/>
            <person name="Vaysberg M."/>
            <person name="Wallender E.K."/>
            <person name="Wong C."/>
            <person name="Yamamura Y."/>
            <person name="Yuan S."/>
            <person name="Shinozaki K."/>
            <person name="Davis R.W."/>
            <person name="Theologis A."/>
            <person name="Ecker J.R."/>
        </authorList>
    </citation>
    <scope>NUCLEOTIDE SEQUENCE [LARGE SCALE MRNA]</scope>
    <source>
        <strain>cv. Columbia</strain>
    </source>
</reference>
<reference key="6">
    <citation type="submission" date="2002-03" db="EMBL/GenBank/DDBJ databases">
        <title>Full-length cDNA from Arabidopsis thaliana.</title>
        <authorList>
            <person name="Brover V.V."/>
            <person name="Troukhan M.E."/>
            <person name="Alexandrov N.A."/>
            <person name="Lu Y.-P."/>
            <person name="Flavell R.B."/>
            <person name="Feldmann K.A."/>
        </authorList>
    </citation>
    <scope>NUCLEOTIDE SEQUENCE [LARGE SCALE MRNA]</scope>
</reference>
<reference key="7">
    <citation type="journal article" date="2000" name="Plant Physiol.">
        <title>Aux/IAA proteins are phosphorylated by phytochrome in vitro.</title>
        <authorList>
            <person name="Colon-Carmona A."/>
            <person name="Chen D.L."/>
            <person name="Yeh K.-C."/>
            <person name="Abel S."/>
        </authorList>
    </citation>
    <scope>PHOSPHORYLATION BY PHYTOCHROME A</scope>
</reference>
<reference key="8">
    <citation type="journal article" date="2002" name="Plant Mol. Biol.">
        <title>Genetics of Aux/IAA and ARF action in plant growth and development.</title>
        <authorList>
            <person name="Liscum E."/>
            <person name="Reed J.W."/>
        </authorList>
    </citation>
    <scope>GENE FAMILY</scope>
    <scope>NOMENCLATURE</scope>
    <scope>FUNCTION</scope>
</reference>
<reference key="9">
    <citation type="journal article" date="2004" name="Plant Cell">
        <title>Aux/IAA proteins contain a potent transcriptional repression domain.</title>
        <authorList>
            <person name="Tiwari S.B."/>
            <person name="Hagen G."/>
            <person name="Guilfoyle T.J."/>
        </authorList>
    </citation>
    <scope>TRANSCRIPTIONAL REPRESSION DOMAIN</scope>
</reference>
<reference key="10">
    <citation type="journal article" date="2008" name="Science">
        <title>TOPLESS mediates auxin-dependent transcriptional repression during Arabidopsis embryogenesis.</title>
        <authorList>
            <person name="Szemenyei H."/>
            <person name="Hannon M."/>
            <person name="Long J.A."/>
        </authorList>
    </citation>
    <scope>INTERACTION WITH TPL</scope>
</reference>
<reference key="11">
    <citation type="journal article" date="2011" name="Mol. Syst. Biol.">
        <title>The auxin signalling network translates dynamic input into robust patterning at the shoot apex.</title>
        <authorList>
            <person name="Vernoux T."/>
            <person name="Brunoud G."/>
            <person name="Farcot E."/>
            <person name="Morin V."/>
            <person name="Van den Daele H."/>
            <person name="Legrand J."/>
            <person name="Oliva M."/>
            <person name="Das P."/>
            <person name="Larrieu A."/>
            <person name="Wells D."/>
            <person name="Guedon Y."/>
            <person name="Armitage L."/>
            <person name="Picard F."/>
            <person name="Guyomarc'h S."/>
            <person name="Cellier C."/>
            <person name="Parry G."/>
            <person name="Koumproglou R."/>
            <person name="Doonan J.H."/>
            <person name="Estelle M."/>
            <person name="Godin C."/>
            <person name="Kepinski S."/>
            <person name="Bennett M."/>
            <person name="De Veylder L."/>
            <person name="Traas J."/>
        </authorList>
    </citation>
    <scope>INTERACTION</scope>
</reference>
<reference key="12">
    <citation type="journal article" date="2014" name="Proc. Natl. Acad. Sci. U.S.A.">
        <title>Molecular basis for AUXIN RESPONSE FACTOR protein interaction and the control of auxin response repression.</title>
        <authorList>
            <person name="Korasick D.A."/>
            <person name="Westfall C.S."/>
            <person name="Lee S.G."/>
            <person name="Nanao M.H."/>
            <person name="Dumas R."/>
            <person name="Hagen G."/>
            <person name="Guilfoyle T.J."/>
            <person name="Jez J.M."/>
            <person name="Strader L.C."/>
        </authorList>
    </citation>
    <scope>MUTAGENESIS OF LYS-114; ASP-183 AND ASP-187</scope>
    <scope>INTERACTION WITH ARF7</scope>
</reference>
<feature type="chain" id="PRO_0000112848" description="Auxin-responsive protein IAA17">
    <location>
        <begin position="1"/>
        <end position="229"/>
    </location>
</feature>
<feature type="domain" description="PB1" evidence="1">
    <location>
        <begin position="110"/>
        <end position="211"/>
    </location>
</feature>
<feature type="short sequence motif" description="EAR-like (transcriptional repression)">
    <location>
        <begin position="14"/>
        <end position="18"/>
    </location>
</feature>
<feature type="mutagenesis site" description="Suppresses the axr3-1 phenotype; when associated with L-88." evidence="8">
    <original>L</original>
    <variation>F</variation>
    <location>
        <position position="16"/>
    </location>
</feature>
<feature type="mutagenesis site" description="In axr3-1; gain of function. Affects auxin-related developmental processes. Affects photomorphogenesis.">
    <original>P</original>
    <variation>L</variation>
    <location>
        <position position="88"/>
    </location>
</feature>
<feature type="mutagenesis site" description="In axr3-3; gain of function. Affects auxin-related developmental processes. Affects photomorphogenesis.">
    <original>V</original>
    <variation>G</variation>
    <location>
        <position position="89"/>
    </location>
</feature>
<feature type="mutagenesis site" description="No effect on interaction with ARF7." evidence="6">
    <original>K</original>
    <variation>A</variation>
    <location>
        <position position="114"/>
    </location>
</feature>
<feature type="mutagenesis site" description="Suppresses the axr3-1 phenotype; when associated with L-88." evidence="8">
    <original>D</original>
    <variation>N</variation>
    <location>
        <position position="118"/>
    </location>
</feature>
<feature type="mutagenesis site" description="Suppresses the axr3-1 phenotype; when associated with L-88." evidence="8">
    <original>P</original>
    <variation>S</variation>
    <location>
        <position position="121"/>
    </location>
</feature>
<feature type="mutagenesis site" description="No effect on interaction with ARF7; when associated with A-187. Loss of interaction with ARF7; when associated with A-114 and A-187." evidence="6">
    <original>D</original>
    <variation>A</variation>
    <location>
        <position position="183"/>
    </location>
</feature>
<feature type="mutagenesis site" description="No effect on interaction with ARF7; when associated with A-183. Loss of interaction with ARF7; when associated with A-114 and A-183." evidence="6">
    <original>D</original>
    <variation>A</variation>
    <location>
        <position position="187"/>
    </location>
</feature>
<feature type="strand" evidence="11">
    <location>
        <begin position="112"/>
        <end position="117"/>
    </location>
</feature>
<feature type="strand" evidence="11">
    <location>
        <begin position="121"/>
        <end position="127"/>
    </location>
</feature>
<feature type="helix" evidence="11">
    <location>
        <begin position="128"/>
        <end position="130"/>
    </location>
</feature>
<feature type="helix" evidence="11">
    <location>
        <begin position="134"/>
        <end position="144"/>
    </location>
</feature>
<feature type="helix" evidence="11">
    <location>
        <begin position="146"/>
        <end position="149"/>
    </location>
</feature>
<feature type="strand" evidence="10">
    <location>
        <begin position="151"/>
        <end position="154"/>
    </location>
</feature>
<feature type="turn" evidence="10">
    <location>
        <begin position="156"/>
        <end position="162"/>
    </location>
</feature>
<feature type="helix" evidence="10">
    <location>
        <begin position="163"/>
        <end position="173"/>
    </location>
</feature>
<feature type="turn" evidence="10">
    <location>
        <begin position="174"/>
        <end position="176"/>
    </location>
</feature>
<feature type="strand" evidence="11">
    <location>
        <begin position="177"/>
        <end position="182"/>
    </location>
</feature>
<feature type="strand" evidence="11">
    <location>
        <begin position="188"/>
        <end position="190"/>
    </location>
</feature>
<feature type="helix" evidence="11">
    <location>
        <begin position="196"/>
        <end position="202"/>
    </location>
</feature>
<feature type="strand" evidence="11">
    <location>
        <begin position="206"/>
        <end position="210"/>
    </location>
</feature>
<feature type="helix" evidence="10">
    <location>
        <begin position="211"/>
        <end position="213"/>
    </location>
</feature>
<feature type="turn" evidence="10">
    <location>
        <begin position="214"/>
        <end position="216"/>
    </location>
</feature>
<protein>
    <recommendedName>
        <fullName>Auxin-responsive protein IAA17</fullName>
    </recommendedName>
    <alternativeName>
        <fullName>Auxin response 3</fullName>
    </alternativeName>
    <alternativeName>
        <fullName>Indoleacetic acid-induced protein 17</fullName>
    </alternativeName>
</protein>
<sequence length="229" mass="25288">MMGSVELNLRETELCLGLPGGDTVAPVTGNKRGFSETVDLKLNLNNEPANKEGSTTHDVVTFDSKEKSACPKDPAKPPAKAQVVGWPPVRSYRKNVMVSCQKSSGGPEAAAFVKVSMDGAPYLRKIDLRMYKSYDELSNALSNMFSSFTMGKHGGEEGMIDFMNERKLMDLVNSWDYVPSYEDKDGDWMLVGDVPWPMFVDTCKRLRLMKGSDAIGLAPRAMEKCKSRA</sequence>
<comment type="function">
    <text evidence="3">Aux/IAA proteins are short-lived transcriptional factors that function as repressors of early auxin response genes at low auxin concentrations. Repression is thought to result from the interaction with auxin response factors (ARFs), proteins that bind to the auxin-responsive promoter element (AuxRE). Formation of heterodimers with ARF proteins may alter their ability to modulate early auxin response genes expression.</text>
</comment>
<comment type="subunit">
    <text evidence="4 5 6 7">Homodimers and heterodimers (PubMed:18258861, PubMed:21734647). Interacts with the auxin response factors ARF1 and IAA24 (PubMed:21734647). Interacts with IAA1 (PubMed:21734647, PubMed:9342315). Interacts with TPL (PubMed:18258861, PubMed:21734647). Interacts (via PB1 domain) with ARF7 (via PB1 domain) (PubMed:21734647, PubMed:24706860).</text>
</comment>
<comment type="interaction">
    <interactant intactId="EBI-632243">
        <id>P93830</id>
    </interactant>
    <interactant intactId="EBI-25522986">
        <id>Q9FIW5</id>
        <label>ANAC094</label>
    </interactant>
    <organismsDiffer>false</organismsDiffer>
    <experiments>3</experiments>
</comment>
<comment type="interaction">
    <interactant intactId="EBI-632243">
        <id>P93830</id>
    </interactant>
    <interactant intactId="EBI-3946783">
        <id>Q9C5W9</id>
        <label>ARF18</label>
    </interactant>
    <organismsDiffer>false</organismsDiffer>
    <experiments>16</experiments>
</comment>
<comment type="interaction">
    <interactant intactId="EBI-632243">
        <id>P93830</id>
    </interactant>
    <interactant intactId="EBI-529887">
        <id>Q8RYC8</id>
        <label>ARF19</label>
    </interactant>
    <organismsDiffer>false</organismsDiffer>
    <experiments>6</experiments>
</comment>
<comment type="interaction">
    <interactant intactId="EBI-632243">
        <id>P93830</id>
    </interactant>
    <interactant intactId="EBI-1799262">
        <id>Q94JM3</id>
        <label>ARF2</label>
    </interactant>
    <organismsDiffer>false</organismsDiffer>
    <experiments>3</experiments>
</comment>
<comment type="interaction">
    <interactant intactId="EBI-632243">
        <id>P93830</id>
    </interactant>
    <interactant intactId="EBI-15392261">
        <id>Q8RV83</id>
        <label>ARF70</label>
    </interactant>
    <organismsDiffer>false</organismsDiffer>
    <experiments>3</experiments>
</comment>
<comment type="interaction">
    <interactant intactId="EBI-632243">
        <id>P93830</id>
    </interactant>
    <interactant intactId="EBI-3946762">
        <id>Q9XED8</id>
        <label>ARF9</label>
    </interactant>
    <organismsDiffer>false</organismsDiffer>
    <experiments>5</experiments>
</comment>
<comment type="interaction">
    <interactant intactId="EBI-632243">
        <id>P93830</id>
    </interactant>
    <interactant intactId="EBI-15192335">
        <id>C0SUW7</id>
        <label>ARID6</label>
    </interactant>
    <organismsDiffer>false</organismsDiffer>
    <experiments>3</experiments>
</comment>
<comment type="interaction">
    <interactant intactId="EBI-632243">
        <id>P93830</id>
    </interactant>
    <interactant intactId="EBI-4447439">
        <id>O80533</id>
        <label>At1g09500</label>
    </interactant>
    <organismsDiffer>false</organismsDiffer>
    <experiments>3</experiments>
</comment>
<comment type="interaction">
    <interactant intactId="EBI-632243">
        <id>P93830</id>
    </interactant>
    <interactant intactId="EBI-697501">
        <id>Q9FVU9</id>
        <label>CSN5B</label>
    </interactant>
    <organismsDiffer>false</organismsDiffer>
    <experiments>3</experiments>
</comment>
<comment type="interaction">
    <interactant intactId="EBI-632243">
        <id>P93830</id>
    </interactant>
    <interactant intactId="EBI-4429217">
        <id>Q8VZS3</id>
        <label>HHO2</label>
    </interactant>
    <organismsDiffer>false</organismsDiffer>
    <experiments>3</experiments>
</comment>
<comment type="interaction">
    <interactant intactId="EBI-632243">
        <id>P93830</id>
    </interactant>
    <interactant intactId="EBI-2298866">
        <id>Q9FPE8</id>
        <label>HHO3</label>
    </interactant>
    <organismsDiffer>false</organismsDiffer>
    <experiments>3</experiments>
</comment>
<comment type="interaction">
    <interactant intactId="EBI-632243">
        <id>P93830</id>
    </interactant>
    <interactant intactId="EBI-630505">
        <id>P49677</id>
        <label>IAA1</label>
    </interactant>
    <organismsDiffer>false</organismsDiffer>
    <experiments>11</experiments>
</comment>
<comment type="interaction">
    <interactant intactId="EBI-632243">
        <id>P93830</id>
    </interactant>
    <interactant intactId="EBI-3946434">
        <id>Q38828</id>
        <label>IAA10</label>
    </interactant>
    <organismsDiffer>false</organismsDiffer>
    <experiments>9</experiments>
</comment>
<comment type="interaction">
    <interactant intactId="EBI-632243">
        <id>P93830</id>
    </interactant>
    <interactant intactId="EBI-2367923">
        <id>Q38829</id>
        <label>IAA11</label>
    </interactant>
    <organismsDiffer>false</organismsDiffer>
    <experiments>8</experiments>
</comment>
<comment type="interaction">
    <interactant intactId="EBI-632243">
        <id>P93830</id>
    </interactant>
    <interactant intactId="EBI-617608">
        <id>Q38830</id>
        <label>IAA12</label>
    </interactant>
    <organismsDiffer>false</organismsDiffer>
    <experiments>9</experiments>
</comment>
<comment type="interaction">
    <interactant intactId="EBI-632243">
        <id>P93830</id>
    </interactant>
    <interactant intactId="EBI-1554143">
        <id>Q38831</id>
        <label>IAA13</label>
    </interactant>
    <organismsDiffer>false</organismsDiffer>
    <experiments>9</experiments>
</comment>
<comment type="interaction">
    <interactant intactId="EBI-632243">
        <id>P93830</id>
    </interactant>
    <interactant intactId="EBI-2295562">
        <id>Q38832</id>
        <label>IAA14</label>
    </interactant>
    <organismsDiffer>false</organismsDiffer>
    <experiments>4</experiments>
</comment>
<comment type="interaction">
    <interactant intactId="EBI-632243">
        <id>P93830</id>
    </interactant>
    <interactant intactId="EBI-25524519">
        <id>A0A2H1ZEF6</id>
        <label>IAA15</label>
    </interactant>
    <organismsDiffer>false</organismsDiffer>
    <experiments>5</experiments>
</comment>
<comment type="interaction">
    <interactant intactId="EBI-632243">
        <id>P93830</id>
    </interactant>
    <interactant intactId="EBI-632231">
        <id>O24407</id>
        <label>IAA16</label>
    </interactant>
    <organismsDiffer>false</organismsDiffer>
    <experiments>8</experiments>
</comment>
<comment type="interaction">
    <interactant intactId="EBI-632243">
        <id>P93830</id>
    </interactant>
    <interactant intactId="EBI-632243">
        <id>P93830</id>
        <label>IAA17</label>
    </interactant>
    <organismsDiffer>false</organismsDiffer>
    <experiments>10</experiments>
</comment>
<comment type="interaction">
    <interactant intactId="EBI-632243">
        <id>P93830</id>
    </interactant>
    <interactant intactId="EBI-2295525">
        <id>O24408</id>
        <label>IAA18</label>
    </interactant>
    <organismsDiffer>false</organismsDiffer>
    <experiments>7</experiments>
</comment>
<comment type="interaction">
    <interactant intactId="EBI-632243">
        <id>P93830</id>
    </interactant>
    <interactant intactId="EBI-632257">
        <id>O24409</id>
        <label>IAA19</label>
    </interactant>
    <organismsDiffer>false</organismsDiffer>
    <experiments>11</experiments>
</comment>
<comment type="interaction">
    <interactant intactId="EBI-632243">
        <id>P93830</id>
    </interactant>
    <interactant intactId="EBI-632343">
        <id>P49678</id>
        <label>IAA2</label>
    </interactant>
    <organismsDiffer>false</organismsDiffer>
    <experiments>10</experiments>
</comment>
<comment type="interaction">
    <interactant intactId="EBI-632243">
        <id>P93830</id>
    </interactant>
    <interactant intactId="EBI-632272">
        <id>O24410</id>
        <label>IAA20</label>
    </interactant>
    <organismsDiffer>false</organismsDiffer>
    <experiments>6</experiments>
</comment>
<comment type="interaction">
    <interactant intactId="EBI-632243">
        <id>P93830</id>
    </interactant>
    <interactant intactId="EBI-3947418">
        <id>Q8LAL2</id>
        <label>IAA26</label>
    </interactant>
    <organismsDiffer>false</organismsDiffer>
    <experiments>9</experiments>
</comment>
<comment type="interaction">
    <interactant intactId="EBI-632243">
        <id>P93830</id>
    </interactant>
    <interactant intactId="EBI-3946677">
        <id>Q9ZSY8</id>
        <label>IAA27</label>
    </interactant>
    <organismsDiffer>false</organismsDiffer>
    <experiments>9</experiments>
</comment>
<comment type="interaction">
    <interactant intactId="EBI-632243">
        <id>P93830</id>
    </interactant>
    <interactant intactId="EBI-3133404">
        <id>Q9XFM0</id>
        <label>IAA28</label>
    </interactant>
    <organismsDiffer>false</organismsDiffer>
    <experiments>9</experiments>
</comment>
<comment type="interaction">
    <interactant intactId="EBI-632243">
        <id>P93830</id>
    </interactant>
    <interactant intactId="EBI-307174">
        <id>Q38822</id>
        <label>IAA3</label>
    </interactant>
    <organismsDiffer>false</organismsDiffer>
    <experiments>14</experiments>
</comment>
<comment type="interaction">
    <interactant intactId="EBI-632243">
        <id>P93830</id>
    </interactant>
    <interactant intactId="EBI-3946408">
        <id>Q8H174</id>
        <label>IAA31</label>
    </interactant>
    <organismsDiffer>false</organismsDiffer>
    <experiments>8</experiments>
</comment>
<comment type="interaction">
    <interactant intactId="EBI-632243">
        <id>P93830</id>
    </interactant>
    <interactant intactId="EBI-3946448">
        <id>Q8RYC6</id>
        <label>IAA32</label>
    </interactant>
    <organismsDiffer>false</organismsDiffer>
    <experiments>7</experiments>
</comment>
<comment type="interaction">
    <interactant intactId="EBI-632243">
        <id>P93830</id>
    </interactant>
    <interactant intactId="EBI-3946739">
        <id>Q9FKM7</id>
        <label>IAA33</label>
    </interactant>
    <organismsDiffer>false</organismsDiffer>
    <experiments>5</experiments>
</comment>
<comment type="interaction">
    <interactant intactId="EBI-632243">
        <id>P93830</id>
    </interactant>
    <interactant intactId="EBI-3946459">
        <id>Q9C5X0</id>
        <label>IAA34</label>
    </interactant>
    <organismsDiffer>false</organismsDiffer>
    <experiments>11</experiments>
</comment>
<comment type="interaction">
    <interactant intactId="EBI-632243">
        <id>P93830</id>
    </interactant>
    <interactant intactId="EBI-632187">
        <id>P33077</id>
        <label>IAA4</label>
    </interactant>
    <organismsDiffer>false</organismsDiffer>
    <experiments>8</experiments>
</comment>
<comment type="interaction">
    <interactant intactId="EBI-632243">
        <id>P93830</id>
    </interactant>
    <interactant intactId="EBI-3946487">
        <id>P33078</id>
        <label>IAA5</label>
    </interactant>
    <organismsDiffer>false</organismsDiffer>
    <experiments>9</experiments>
</comment>
<comment type="interaction">
    <interactant intactId="EBI-632243">
        <id>P93830</id>
    </interactant>
    <interactant intactId="EBI-1554124">
        <id>Q38824</id>
        <label>IAA6</label>
    </interactant>
    <organismsDiffer>false</organismsDiffer>
    <experiments>8</experiments>
</comment>
<comment type="interaction">
    <interactant intactId="EBI-632243">
        <id>P93830</id>
    </interactant>
    <interactant intactId="EBI-632200">
        <id>Q38826</id>
        <label>IAA8</label>
    </interactant>
    <organismsDiffer>false</organismsDiffer>
    <experiments>8</experiments>
</comment>
<comment type="interaction">
    <interactant intactId="EBI-632243">
        <id>P93830</id>
    </interactant>
    <interactant intactId="EBI-632216">
        <id>Q38827</id>
        <label>IAA9</label>
    </interactant>
    <organismsDiffer>false</organismsDiffer>
    <experiments>4</experiments>
</comment>
<comment type="interaction">
    <interactant intactId="EBI-632243">
        <id>P93830</id>
    </interactant>
    <interactant intactId="EBI-1253508">
        <id>F4JL11</id>
        <label>IMPA2</label>
    </interactant>
    <organismsDiffer>false</organismsDiffer>
    <experiments>3</experiments>
</comment>
<comment type="interaction">
    <interactant intactId="EBI-632243">
        <id>P93830</id>
    </interactant>
    <interactant intactId="EBI-1644689">
        <id>O04294</id>
        <label>IMPA3</label>
    </interactant>
    <organismsDiffer>false</organismsDiffer>
    <experiments>3</experiments>
</comment>
<comment type="interaction">
    <interactant intactId="EBI-632243">
        <id>P93830</id>
    </interactant>
    <interactant intactId="EBI-4431755">
        <id>Q9FWY7</id>
        <label>IMPA6</label>
    </interactant>
    <organismsDiffer>false</organismsDiffer>
    <experiments>3</experiments>
</comment>
<comment type="interaction">
    <interactant intactId="EBI-632243">
        <id>P93830</id>
    </interactant>
    <interactant intactId="EBI-4445335">
        <id>Q5XEN5</id>
        <label>MBD1</label>
    </interactant>
    <organismsDiffer>false</organismsDiffer>
    <experiments>7</experiments>
</comment>
<comment type="interaction">
    <interactant intactId="EBI-632243">
        <id>P93830</id>
    </interactant>
    <interactant intactId="EBI-15198743">
        <id>Q9LSI4</id>
        <label>MGH6.1</label>
    </interactant>
    <organismsDiffer>false</organismsDiffer>
    <experiments>3</experiments>
</comment>
<comment type="interaction">
    <interactant intactId="EBI-632243">
        <id>P93830</id>
    </interactant>
    <interactant intactId="EBI-21497119">
        <id>Q9LTC4</id>
        <label>MYB15</label>
    </interactant>
    <organismsDiffer>false</organismsDiffer>
    <experiments>3</experiments>
</comment>
<comment type="interaction">
    <interactant intactId="EBI-632243">
        <id>P93830</id>
    </interactant>
    <interactant intactId="EBI-1238013">
        <id>O22179</id>
        <label>MYB70</label>
    </interactant>
    <organismsDiffer>false</organismsDiffer>
    <experiments>3</experiments>
</comment>
<comment type="interaction">
    <interactant intactId="EBI-632243">
        <id>P93830</id>
    </interactant>
    <interactant intactId="EBI-25523464">
        <id>Q9FK47</id>
        <label>MYR1</label>
    </interactant>
    <organismsDiffer>false</organismsDiffer>
    <experiments>3</experiments>
</comment>
<comment type="interaction">
    <interactant intactId="EBI-632243">
        <id>P93830</id>
    </interactant>
    <interactant intactId="EBI-4443730">
        <id>Q8LAJ7</id>
        <label>PHL3</label>
    </interactant>
    <organismsDiffer>false</organismsDiffer>
    <experiments>3</experiments>
</comment>
<comment type="interaction">
    <interactant intactId="EBI-632243">
        <id>P93830</id>
    </interactant>
    <interactant intactId="EBI-963647">
        <id>Q9C8Y3</id>
        <label>RGL1</label>
    </interactant>
    <organismsDiffer>false</organismsDiffer>
    <experiments>3</experiments>
</comment>
<comment type="interaction">
    <interactant intactId="EBI-632243">
        <id>P93830</id>
    </interactant>
    <interactant intactId="EBI-4424877">
        <id>Q9S7W5</id>
        <label>TCP13</label>
    </interactant>
    <organismsDiffer>false</organismsDiffer>
    <experiments>5</experiments>
</comment>
<comment type="interaction">
    <interactant intactId="EBI-632243">
        <id>P93830</id>
    </interactant>
    <interactant intactId="EBI-4426144">
        <id>Q9C9L2</id>
        <label>TCP15</label>
    </interactant>
    <organismsDiffer>false</organismsDiffer>
    <experiments>6</experiments>
</comment>
<comment type="interaction">
    <interactant intactId="EBI-632243">
        <id>P93830</id>
    </interactant>
    <interactant intactId="EBI-15198627">
        <id>Q9M1U4</id>
        <label>TCP16</label>
    </interactant>
    <organismsDiffer>false</organismsDiffer>
    <experiments>6</experiments>
</comment>
<comment type="interaction">
    <interactant intactId="EBI-632243">
        <id>P93830</id>
    </interactant>
    <interactant intactId="EBI-4426168">
        <id>Q9FTA2</id>
        <label>TCP21</label>
    </interactant>
    <organismsDiffer>false</organismsDiffer>
    <experiments>3</experiments>
</comment>
<comment type="interaction">
    <interactant intactId="EBI-632243">
        <id>P93830</id>
    </interactant>
    <interactant intactId="EBI-25522447">
        <id>Q9MAH8</id>
        <label>TCP3</label>
    </interactant>
    <organismsDiffer>false</organismsDiffer>
    <experiments>3</experiments>
</comment>
<comment type="interaction">
    <interactant intactId="EBI-632243">
        <id>P93830</id>
    </interactant>
    <interactant intactId="EBI-15192325">
        <id>Q8LPR5</id>
        <label>TCP4</label>
    </interactant>
    <organismsDiffer>false</organismsDiffer>
    <experiments>3</experiments>
</comment>
<comment type="interaction">
    <interactant intactId="EBI-632243">
        <id>P93830</id>
    </interactant>
    <interactant intactId="EBI-9838721">
        <id>O64647</id>
        <label>TCP9</label>
    </interactant>
    <organismsDiffer>false</organismsDiffer>
    <experiments>3</experiments>
</comment>
<comment type="interaction">
    <interactant intactId="EBI-632243">
        <id>P93830</id>
    </interactant>
    <interactant intactId="EBI-307183">
        <id>Q570C0</id>
        <label>TIR1</label>
    </interactant>
    <organismsDiffer>false</organismsDiffer>
    <experiments>2</experiments>
</comment>
<comment type="interaction">
    <interactant intactId="EBI-632243">
        <id>P93830</id>
    </interactant>
    <interactant intactId="EBI-1806701">
        <id>Q9LQW3</id>
        <label>ZHD14</label>
    </interactant>
    <organismsDiffer>false</organismsDiffer>
    <experiments>3</experiments>
</comment>
<comment type="subcellular location">
    <subcellularLocation>
        <location>Nucleus</location>
    </subcellularLocation>
</comment>
<comment type="induction">
    <text>By auxin.</text>
</comment>
<comment type="domain">
    <text>The N-terminal half of the protein contains two conserved domains I and II. Domain I includes a slightly degenerated ERF-associated amphiphilic repression (EAR) motif which seems to be involved in the activity of transcriptional repression. Domain II is required for the correct degradation of the protein through the SCF-mediated ubiquitin-proteasome pathway. Interactions between Aux/IAA proteins and auxin response factors (ARFs) occur through their C-terminal dimerization domains III and IV.</text>
</comment>
<comment type="PTM">
    <text evidence="2">Phosphorylated by phytochrome A in vitro.</text>
</comment>
<comment type="miscellaneous">
    <text>Increased auxin response of mutants axr3-1 and axr3-3 may result from an increased stability of AXR3.</text>
</comment>
<comment type="similarity">
    <text evidence="9">Belongs to the Aux/IAA family.</text>
</comment>
<comment type="sequence caution" evidence="9">
    <conflict type="erroneous initiation">
        <sequence resource="EMBL-CDS" id="AAM64837"/>
    </conflict>
    <text>Truncated N-terminus.</text>
</comment>
<accession>P93830</accession>
<accession>O49162</accession>
<organism>
    <name type="scientific">Arabidopsis thaliana</name>
    <name type="common">Mouse-ear cress</name>
    <dbReference type="NCBI Taxonomy" id="3702"/>
    <lineage>
        <taxon>Eukaryota</taxon>
        <taxon>Viridiplantae</taxon>
        <taxon>Streptophyta</taxon>
        <taxon>Embryophyta</taxon>
        <taxon>Tracheophyta</taxon>
        <taxon>Spermatophyta</taxon>
        <taxon>Magnoliopsida</taxon>
        <taxon>eudicotyledons</taxon>
        <taxon>Gunneridae</taxon>
        <taxon>Pentapetalae</taxon>
        <taxon>rosids</taxon>
        <taxon>malvids</taxon>
        <taxon>Brassicales</taxon>
        <taxon>Brassicaceae</taxon>
        <taxon>Camelineae</taxon>
        <taxon>Arabidopsis</taxon>
    </lineage>
</organism>
<evidence type="ECO:0000255" key="1">
    <source>
        <dbReference type="PROSITE-ProRule" id="PRU01081"/>
    </source>
</evidence>
<evidence type="ECO:0000269" key="2">
    <source>
    </source>
</evidence>
<evidence type="ECO:0000269" key="3">
    <source>
    </source>
</evidence>
<evidence type="ECO:0000269" key="4">
    <source>
    </source>
</evidence>
<evidence type="ECO:0000269" key="5">
    <source>
    </source>
</evidence>
<evidence type="ECO:0000269" key="6">
    <source>
    </source>
</evidence>
<evidence type="ECO:0000269" key="7">
    <source>
    </source>
</evidence>
<evidence type="ECO:0000269" key="8">
    <source>
    </source>
</evidence>
<evidence type="ECO:0000305" key="9"/>
<evidence type="ECO:0007829" key="10">
    <source>
        <dbReference type="PDB" id="2MUK"/>
    </source>
</evidence>
<evidence type="ECO:0007829" key="11">
    <source>
        <dbReference type="PDB" id="6L5K"/>
    </source>
</evidence>
<dbReference type="EMBL" id="U49073">
    <property type="protein sequence ID" value="AAB84354.1"/>
    <property type="molecule type" value="mRNA"/>
</dbReference>
<dbReference type="EMBL" id="AF040631">
    <property type="protein sequence ID" value="AAC39439.1"/>
    <property type="molecule type" value="Genomic_DNA"/>
</dbReference>
<dbReference type="EMBL" id="AF040632">
    <property type="protein sequence ID" value="AAC39440.1"/>
    <property type="molecule type" value="Genomic_DNA"/>
</dbReference>
<dbReference type="EMBL" id="AC000104">
    <property type="protein sequence ID" value="AAB70451.2"/>
    <property type="molecule type" value="Genomic_DNA"/>
</dbReference>
<dbReference type="EMBL" id="CP002684">
    <property type="protein sequence ID" value="AEE27674.1"/>
    <property type="molecule type" value="Genomic_DNA"/>
</dbReference>
<dbReference type="EMBL" id="AF336916">
    <property type="protein sequence ID" value="AAG53997.1"/>
    <property type="molecule type" value="mRNA"/>
</dbReference>
<dbReference type="EMBL" id="AY070094">
    <property type="protein sequence ID" value="AAL49831.1"/>
    <property type="molecule type" value="mRNA"/>
</dbReference>
<dbReference type="EMBL" id="AY117183">
    <property type="protein sequence ID" value="AAM51258.1"/>
    <property type="molecule type" value="mRNA"/>
</dbReference>
<dbReference type="EMBL" id="AY087284">
    <property type="protein sequence ID" value="AAM64837.1"/>
    <property type="status" value="ALT_INIT"/>
    <property type="molecule type" value="mRNA"/>
</dbReference>
<dbReference type="PIR" id="H86173">
    <property type="entry name" value="H86173"/>
</dbReference>
<dbReference type="RefSeq" id="NP_171921.1">
    <property type="nucleotide sequence ID" value="NM_100306.4"/>
</dbReference>
<dbReference type="PDB" id="2MUK">
    <property type="method" value="NMR"/>
    <property type="chains" value="X=105-217"/>
</dbReference>
<dbReference type="PDB" id="6L5K">
    <property type="method" value="X-ray"/>
    <property type="resolution" value="2.91 A"/>
    <property type="chains" value="B=105-217"/>
</dbReference>
<dbReference type="PDBsum" id="2MUK"/>
<dbReference type="PDBsum" id="6L5K"/>
<dbReference type="BMRB" id="P93830"/>
<dbReference type="SMR" id="P93830"/>
<dbReference type="BioGRID" id="24803">
    <property type="interactions" value="93"/>
</dbReference>
<dbReference type="ELM" id="P93830"/>
<dbReference type="FunCoup" id="P93830">
    <property type="interactions" value="290"/>
</dbReference>
<dbReference type="IntAct" id="P93830">
    <property type="interactions" value="90"/>
</dbReference>
<dbReference type="STRING" id="3702.P93830"/>
<dbReference type="PaxDb" id="3702-AT1G04250.1"/>
<dbReference type="ProteomicsDB" id="250633"/>
<dbReference type="DNASU" id="839568"/>
<dbReference type="EnsemblPlants" id="AT1G04250.1">
    <property type="protein sequence ID" value="AT1G04250.1"/>
    <property type="gene ID" value="AT1G04250"/>
</dbReference>
<dbReference type="GeneID" id="839568"/>
<dbReference type="Gramene" id="AT1G04250.1">
    <property type="protein sequence ID" value="AT1G04250.1"/>
    <property type="gene ID" value="AT1G04250"/>
</dbReference>
<dbReference type="KEGG" id="ath:AT1G04250"/>
<dbReference type="Araport" id="AT1G04250"/>
<dbReference type="TAIR" id="AT1G04250">
    <property type="gene designation" value="AXR3"/>
</dbReference>
<dbReference type="eggNOG" id="ENOG502QPNB">
    <property type="taxonomic scope" value="Eukaryota"/>
</dbReference>
<dbReference type="HOGENOM" id="CLU_049393_1_5_1"/>
<dbReference type="InParanoid" id="P93830"/>
<dbReference type="OMA" id="NTWDYVP"/>
<dbReference type="OrthoDB" id="642974at2759"/>
<dbReference type="PhylomeDB" id="P93830"/>
<dbReference type="EvolutionaryTrace" id="P93830"/>
<dbReference type="PRO" id="PR:P93830"/>
<dbReference type="Proteomes" id="UP000006548">
    <property type="component" value="Chromosome 1"/>
</dbReference>
<dbReference type="ExpressionAtlas" id="P93830">
    <property type="expression patterns" value="baseline and differential"/>
</dbReference>
<dbReference type="GO" id="GO:0005634">
    <property type="term" value="C:nucleus"/>
    <property type="evidence" value="ECO:0000314"/>
    <property type="project" value="TAIR"/>
</dbReference>
<dbReference type="GO" id="GO:0003700">
    <property type="term" value="F:DNA-binding transcription factor activity"/>
    <property type="evidence" value="ECO:0000250"/>
    <property type="project" value="TAIR"/>
</dbReference>
<dbReference type="GO" id="GO:0042802">
    <property type="term" value="F:identical protein binding"/>
    <property type="evidence" value="ECO:0000353"/>
    <property type="project" value="IntAct"/>
</dbReference>
<dbReference type="GO" id="GO:0009734">
    <property type="term" value="P:auxin-activated signaling pathway"/>
    <property type="evidence" value="ECO:0000304"/>
    <property type="project" value="TAIR"/>
</dbReference>
<dbReference type="GO" id="GO:1900057">
    <property type="term" value="P:positive regulation of leaf senescence"/>
    <property type="evidence" value="ECO:0000315"/>
    <property type="project" value="TAIR"/>
</dbReference>
<dbReference type="GO" id="GO:0009733">
    <property type="term" value="P:response to auxin"/>
    <property type="evidence" value="ECO:0000315"/>
    <property type="project" value="TAIR"/>
</dbReference>
<dbReference type="FunFam" id="3.10.20.90:FF:000078">
    <property type="entry name" value="Auxin-responsive protein"/>
    <property type="match status" value="1"/>
</dbReference>
<dbReference type="Gene3D" id="3.10.20.90">
    <property type="entry name" value="Phosphatidylinositol 3-kinase Catalytic Subunit, Chain A, domain 1"/>
    <property type="match status" value="1"/>
</dbReference>
<dbReference type="InterPro" id="IPR033389">
    <property type="entry name" value="AUX/IAA_dom"/>
</dbReference>
<dbReference type="InterPro" id="IPR003311">
    <property type="entry name" value="AUX_IAA"/>
</dbReference>
<dbReference type="InterPro" id="IPR053793">
    <property type="entry name" value="PB1-like"/>
</dbReference>
<dbReference type="PANTHER" id="PTHR31734">
    <property type="entry name" value="AUXIN-RESPONSIVE PROTEIN IAA17"/>
    <property type="match status" value="1"/>
</dbReference>
<dbReference type="PANTHER" id="PTHR31734:SF126">
    <property type="entry name" value="AUXIN-RESPONSIVE PROTEIN IAA17"/>
    <property type="match status" value="1"/>
</dbReference>
<dbReference type="Pfam" id="PF02309">
    <property type="entry name" value="AUX_IAA"/>
    <property type="match status" value="1"/>
</dbReference>
<dbReference type="SUPFAM" id="SSF54277">
    <property type="entry name" value="CAD &amp; PB1 domains"/>
    <property type="match status" value="1"/>
</dbReference>
<dbReference type="PROSITE" id="PS51745">
    <property type="entry name" value="PB1"/>
    <property type="match status" value="1"/>
</dbReference>
<keyword id="KW-0002">3D-structure</keyword>
<keyword id="KW-0927">Auxin signaling pathway</keyword>
<keyword id="KW-0539">Nucleus</keyword>
<keyword id="KW-0597">Phosphoprotein</keyword>
<keyword id="KW-1185">Reference proteome</keyword>
<keyword id="KW-0678">Repressor</keyword>
<keyword id="KW-0804">Transcription</keyword>
<keyword id="KW-0805">Transcription regulation</keyword>
<proteinExistence type="evidence at protein level"/>